<comment type="function">
    <text evidence="1">Inhibits coagulant activity in human plasma, possibly by interfering with one step of hemostasis (modulation of platelet aggregation, or coagulation cascade, for example) (Ref.1). Does not show fibrinogen-clotting activity and does not inhibit ADP-induced platelet aggregation (Ref.1). Also does not show hemorrhagic activity in mice (Ref.1).</text>
</comment>
<comment type="subcellular location">
    <subcellularLocation>
        <location evidence="1">Secreted</location>
    </subcellularLocation>
</comment>
<comment type="tissue specificity">
    <text evidence="4">Expressed by the venom gland.</text>
</comment>
<comment type="similarity">
    <text evidence="3">Belongs to the snaclec family.</text>
</comment>
<keyword id="KW-0903">Direct protein sequencing</keyword>
<keyword id="KW-1199">Hemostasis impairing toxin</keyword>
<keyword id="KW-0964">Secreted</keyword>
<keyword id="KW-0800">Toxin</keyword>
<accession>C0HL88</accession>
<name>SL_CROVE</name>
<protein>
    <recommendedName>
        <fullName evidence="2">Snaclec uracolectin</fullName>
    </recommendedName>
</protein>
<dbReference type="GO" id="GO:0005576">
    <property type="term" value="C:extracellular region"/>
    <property type="evidence" value="ECO:0007669"/>
    <property type="project" value="UniProtKB-SubCell"/>
</dbReference>
<dbReference type="GO" id="GO:0090729">
    <property type="term" value="F:toxin activity"/>
    <property type="evidence" value="ECO:0007669"/>
    <property type="project" value="UniProtKB-KW"/>
</dbReference>
<sequence length="12" mass="1334">DLPSGWSSYEGH</sequence>
<organism evidence="2">
    <name type="scientific">Crotalus vegrandis</name>
    <name type="common">Uracoan rattlesnake</name>
    <name type="synonym">Crotalus durissus vegrandis</name>
    <dbReference type="NCBI Taxonomy" id="184545"/>
    <lineage>
        <taxon>Eukaryota</taxon>
        <taxon>Metazoa</taxon>
        <taxon>Chordata</taxon>
        <taxon>Craniata</taxon>
        <taxon>Vertebrata</taxon>
        <taxon>Euteleostomi</taxon>
        <taxon>Lepidosauria</taxon>
        <taxon>Squamata</taxon>
        <taxon>Bifurcata</taxon>
        <taxon>Unidentata</taxon>
        <taxon>Episquamata</taxon>
        <taxon>Toxicofera</taxon>
        <taxon>Serpentes</taxon>
        <taxon>Colubroidea</taxon>
        <taxon>Viperidae</taxon>
        <taxon>Crotalinae</taxon>
        <taxon>Crotalus</taxon>
    </lineage>
</organism>
<evidence type="ECO:0000269" key="1">
    <source ref="1"/>
</evidence>
<evidence type="ECO:0000303" key="2">
    <source ref="1"/>
</evidence>
<evidence type="ECO:0000305" key="3"/>
<evidence type="ECO:0000305" key="4">
    <source ref="1"/>
</evidence>
<feature type="chain" id="PRO_0000443946" description="Snaclec uracolectin" evidence="1">
    <location>
        <begin position="1"/>
        <end position="12" status="greater than"/>
    </location>
</feature>
<feature type="unsure residue" description="L or G" evidence="1">
    <location>
        <position position="2"/>
    </location>
</feature>
<feature type="non-terminal residue" evidence="2">
    <location>
        <position position="12"/>
    </location>
</feature>
<proteinExistence type="evidence at protein level"/>
<reference key="1">
    <citation type="journal article" date="2020" name="Saber">
        <title>Haemostatic and biological activities of the Uracoan rattlesnake (Crotalus vegrandis Klauber 1941) venom: isolation of a new snalecs-like uracolectin with coagulent activity.</title>
        <authorList>
            <person name="Giron M.E."/>
            <person name="Ramos M.I."/>
            <person name="Cantillo A.C."/>
            <person name="Oramas J.A."/>
            <person name="Sanchez E.E."/>
            <person name="Jimenez J.C."/>
            <person name="Suntravat M."/>
            <person name="Navarrete L.F."/>
            <person name="Rodriguez-Acosta A."/>
        </authorList>
    </citation>
    <scope>PROTEIN SEQUENCE</scope>
    <scope>FUNCTION</scope>
    <scope>SUBCELLULAR LOCATION</scope>
    <source>
        <tissue evidence="2">Venom</tissue>
    </source>
</reference>